<proteinExistence type="inferred from homology"/>
<keyword id="KW-0153">Cholesterol metabolism</keyword>
<keyword id="KW-0285">Flavoprotein</keyword>
<keyword id="KW-0288">FMN</keyword>
<keyword id="KW-0443">Lipid metabolism</keyword>
<keyword id="KW-0520">NAD</keyword>
<keyword id="KW-0547">Nucleotide-binding</keyword>
<keyword id="KW-0560">Oxidoreductase</keyword>
<keyword id="KW-0753">Steroid metabolism</keyword>
<keyword id="KW-1207">Sterol metabolism</keyword>
<evidence type="ECO:0000250" key="1">
    <source>
        <dbReference type="UniProtKB" id="P71847"/>
    </source>
</evidence>
<evidence type="ECO:0000250" key="2">
    <source>
        <dbReference type="UniProtKB" id="Q9I4V0"/>
    </source>
</evidence>
<evidence type="ECO:0000269" key="3">
    <source>
    </source>
</evidence>
<evidence type="ECO:0000303" key="4">
    <source>
    </source>
</evidence>
<evidence type="ECO:0000305" key="5"/>
<evidence type="ECO:0000312" key="6">
    <source>
        <dbReference type="EMBL" id="ABG96435.1"/>
    </source>
</evidence>
<gene>
    <name evidence="4" type="primary">ipdC</name>
    <name evidence="6" type="ordered locus">RHA1_ro04649</name>
</gene>
<name>IPDC_RHOJR</name>
<dbReference type="EC" id="1.3.1.-" evidence="1"/>
<dbReference type="EMBL" id="CP000431">
    <property type="protein sequence ID" value="ABG96435.1"/>
    <property type="molecule type" value="Genomic_DNA"/>
</dbReference>
<dbReference type="RefSeq" id="WP_011597003.1">
    <property type="nucleotide sequence ID" value="NC_008268.1"/>
</dbReference>
<dbReference type="SMR" id="Q0S7Q1"/>
<dbReference type="KEGG" id="rha:RHA1_ro04649"/>
<dbReference type="PATRIC" id="fig|101510.16.peg.4692"/>
<dbReference type="eggNOG" id="COG2070">
    <property type="taxonomic scope" value="Bacteria"/>
</dbReference>
<dbReference type="HOGENOM" id="CLU_038732_1_1_11"/>
<dbReference type="OrthoDB" id="9778912at2"/>
<dbReference type="UniPathway" id="UPA01058"/>
<dbReference type="Proteomes" id="UP000008710">
    <property type="component" value="Chromosome"/>
</dbReference>
<dbReference type="GO" id="GO:0018580">
    <property type="term" value="F:nitronate monooxygenase activity"/>
    <property type="evidence" value="ECO:0007669"/>
    <property type="project" value="InterPro"/>
</dbReference>
<dbReference type="GO" id="GO:0000166">
    <property type="term" value="F:nucleotide binding"/>
    <property type="evidence" value="ECO:0007669"/>
    <property type="project" value="UniProtKB-KW"/>
</dbReference>
<dbReference type="GO" id="GO:0006707">
    <property type="term" value="P:cholesterol catabolic process"/>
    <property type="evidence" value="ECO:0007669"/>
    <property type="project" value="UniProtKB-UniPathway"/>
</dbReference>
<dbReference type="CDD" id="cd04730">
    <property type="entry name" value="NPD_like"/>
    <property type="match status" value="1"/>
</dbReference>
<dbReference type="Gene3D" id="3.20.20.70">
    <property type="entry name" value="Aldolase class I"/>
    <property type="match status" value="1"/>
</dbReference>
<dbReference type="InterPro" id="IPR013785">
    <property type="entry name" value="Aldolase_TIM"/>
</dbReference>
<dbReference type="InterPro" id="IPR004136">
    <property type="entry name" value="NMO"/>
</dbReference>
<dbReference type="PANTHER" id="PTHR32332">
    <property type="entry name" value="2-NITROPROPANE DIOXYGENASE"/>
    <property type="match status" value="1"/>
</dbReference>
<dbReference type="PANTHER" id="PTHR32332:SF20">
    <property type="entry name" value="2-NITROPROPANE DIOXYGENASE-LIKE PROTEIN"/>
    <property type="match status" value="1"/>
</dbReference>
<dbReference type="Pfam" id="PF03060">
    <property type="entry name" value="NMO"/>
    <property type="match status" value="2"/>
</dbReference>
<dbReference type="SUPFAM" id="SSF51412">
    <property type="entry name" value="Inosine monophosphate dehydrogenase (IMPDH)"/>
    <property type="match status" value="1"/>
</dbReference>
<accession>Q0S7Q1</accession>
<comment type="function">
    <text evidence="1 3">Involved in the final steps of cholesterol and steroid degradation (PubMed:28377529). Probably catalyzes the introduction of a double bound into the C ring of 5OH-HIC-CoA, leading to the formation of (5R,7aS)-5-hydroxy-7a-methyl-1-oxo-3,5,6,7-tetrahydro-2H-indene-4-carboxyl-CoA (By similarity).</text>
</comment>
<comment type="catalytic activity">
    <reaction evidence="1">
        <text>(3aS,4S,5R,7aS)-5-hydroxy-7a-methyl-1-oxo-octahydro-1H-indene-4-carboxyl-CoA + NAD(+) = (5R,7aS)-5-hydroxy-7a-methyl-1-oxo-2,3,5,6,7,7a-hexahydro-1H-indene-carboxyl-CoA + NADH + H(+)</text>
        <dbReference type="Rhea" id="RHEA:66352"/>
        <dbReference type="ChEBI" id="CHEBI:15378"/>
        <dbReference type="ChEBI" id="CHEBI:57540"/>
        <dbReference type="ChEBI" id="CHEBI:57945"/>
        <dbReference type="ChEBI" id="CHEBI:167058"/>
        <dbReference type="ChEBI" id="CHEBI:167096"/>
    </reaction>
    <physiologicalReaction direction="left-to-right" evidence="1">
        <dbReference type="Rhea" id="RHEA:66353"/>
    </physiologicalReaction>
</comment>
<comment type="pathway">
    <text evidence="3">Steroid metabolism; cholesterol degradation.</text>
</comment>
<comment type="disruption phenotype">
    <text evidence="3">Deletion mutant does not grow on cholesterol or HIP, but grows as the wild-type on pyruvate. In the presence of cholesterol, disruption mutant accumulates 5OH-HIC-CoA.</text>
</comment>
<comment type="similarity">
    <text evidence="5">Belongs to the nitronate monooxygenase family.</text>
</comment>
<protein>
    <recommendedName>
        <fullName evidence="5">(3aS,4S,5R,7aS)-5-hydroxy-7a-methyl-1-oxo-octahydro-1H-indene-4-carboxyl-CoA dehydrogenase</fullName>
        <shortName evidence="5">5OH-HIC-CoA dehydrogenase</shortName>
        <ecNumber evidence="1">1.3.1.-</ecNumber>
    </recommendedName>
</protein>
<sequence>MSTLRTALTELVGVQHPVVQTGMGWVAGPRLVAGTANAGGLGILASATMTYTELESAITKTKTLTDKPFGVNIRADASDAPHRIDLLIRESVRVASFALAPKQELIAKLKAAGVVVIPSIGAAKHAKKVASWGADAVIVQGGEGGGHTGPVATTLLLPSVLDAVDIPVVAAGGFYDGRGLAAALAYGAAGVAMGTRFLLTQESTVPDSVKHEYLARGLQDTTVSRKVDGMPHRVLNTDLVNSLEHSGNMRGLVAAARNASKFKAMTGMKWSTLVKDGLAMKKSSDRTWQQIIMAANTPMLLKAGLVEGNTHAGVLASGQVVGLLDDLPTCKDLIDGIVADAIKRIDALGALRA</sequence>
<feature type="chain" id="PRO_0000452308" description="(3aS,4S,5R,7aS)-5-hydroxy-7a-methyl-1-oxo-octahydro-1H-indene-4-carboxyl-CoA dehydrogenase">
    <location>
        <begin position="1"/>
        <end position="353"/>
    </location>
</feature>
<feature type="binding site" evidence="2">
    <location>
        <begin position="22"/>
        <end position="24"/>
    </location>
    <ligand>
        <name>FMN</name>
        <dbReference type="ChEBI" id="CHEBI:58210"/>
    </ligand>
</feature>
<feature type="binding site" evidence="2">
    <location>
        <begin position="171"/>
        <end position="173"/>
    </location>
    <ligand>
        <name>FMN</name>
        <dbReference type="ChEBI" id="CHEBI:58210"/>
    </ligand>
</feature>
<feature type="binding site" evidence="2">
    <location>
        <begin position="194"/>
        <end position="195"/>
    </location>
    <ligand>
        <name>FMN</name>
        <dbReference type="ChEBI" id="CHEBI:58210"/>
    </ligand>
</feature>
<reference key="1">
    <citation type="journal article" date="2006" name="Proc. Natl. Acad. Sci. U.S.A.">
        <title>The complete genome of Rhodococcus sp. RHA1 provides insights into a catabolic powerhouse.</title>
        <authorList>
            <person name="McLeod M.P."/>
            <person name="Warren R.L."/>
            <person name="Hsiao W.W.L."/>
            <person name="Araki N."/>
            <person name="Myhre M."/>
            <person name="Fernandes C."/>
            <person name="Miyazawa D."/>
            <person name="Wong W."/>
            <person name="Lillquist A.L."/>
            <person name="Wang D."/>
            <person name="Dosanjh M."/>
            <person name="Hara H."/>
            <person name="Petrescu A."/>
            <person name="Morin R.D."/>
            <person name="Yang G."/>
            <person name="Stott J.M."/>
            <person name="Schein J.E."/>
            <person name="Shin H."/>
            <person name="Smailus D."/>
            <person name="Siddiqui A.S."/>
            <person name="Marra M.A."/>
            <person name="Jones S.J.M."/>
            <person name="Holt R."/>
            <person name="Brinkman F.S.L."/>
            <person name="Miyauchi K."/>
            <person name="Fukuda M."/>
            <person name="Davies J.E."/>
            <person name="Mohn W.W."/>
            <person name="Eltis L.D."/>
        </authorList>
    </citation>
    <scope>NUCLEOTIDE SEQUENCE [LARGE SCALE GENOMIC DNA]</scope>
    <source>
        <strain>RHA1</strain>
    </source>
</reference>
<reference key="2">
    <citation type="journal article" date="2017" name="MBio">
        <title>Catabolism of the last two steroid rings in Mycobacterium tuberculosis and other bacteria.</title>
        <authorList>
            <person name="Crowe A.M."/>
            <person name="Casabon I."/>
            <person name="Brown K.L."/>
            <person name="Liu J."/>
            <person name="Lian J."/>
            <person name="Rogalski J.C."/>
            <person name="Hurst T.E."/>
            <person name="Snieckus V."/>
            <person name="Foster L.J."/>
            <person name="Eltis L.D."/>
        </authorList>
    </citation>
    <scope>FUNCTION</scope>
    <scope>PATHWAY</scope>
    <scope>DISRUPTION PHENOTYPE</scope>
    <source>
        <strain>RHA1</strain>
    </source>
</reference>
<organism>
    <name type="scientific">Rhodococcus jostii (strain RHA1)</name>
    <dbReference type="NCBI Taxonomy" id="101510"/>
    <lineage>
        <taxon>Bacteria</taxon>
        <taxon>Bacillati</taxon>
        <taxon>Actinomycetota</taxon>
        <taxon>Actinomycetes</taxon>
        <taxon>Mycobacteriales</taxon>
        <taxon>Nocardiaceae</taxon>
        <taxon>Rhodococcus</taxon>
    </lineage>
</organism>